<accession>C3P9D5</accession>
<dbReference type="EMBL" id="CP001598">
    <property type="protein sequence ID" value="ACQ48058.1"/>
    <property type="molecule type" value="Genomic_DNA"/>
</dbReference>
<dbReference type="RefSeq" id="WP_000391517.1">
    <property type="nucleotide sequence ID" value="NC_012659.1"/>
</dbReference>
<dbReference type="SMR" id="C3P9D5"/>
<dbReference type="GeneID" id="93006651"/>
<dbReference type="KEGG" id="bai:BAA_4700"/>
<dbReference type="HOGENOM" id="CLU_048711_1_1_9"/>
<dbReference type="GO" id="GO:0000902">
    <property type="term" value="P:cell morphogenesis"/>
    <property type="evidence" value="ECO:0007669"/>
    <property type="project" value="InterPro"/>
</dbReference>
<dbReference type="GO" id="GO:0000917">
    <property type="term" value="P:division septum assembly"/>
    <property type="evidence" value="ECO:0007669"/>
    <property type="project" value="UniProtKB-KW"/>
</dbReference>
<dbReference type="GO" id="GO:1901891">
    <property type="term" value="P:regulation of cell septum assembly"/>
    <property type="evidence" value="ECO:0007669"/>
    <property type="project" value="InterPro"/>
</dbReference>
<dbReference type="FunFam" id="2.160.20.70:FF:000003">
    <property type="entry name" value="Probable septum site-determining protein MinC"/>
    <property type="match status" value="1"/>
</dbReference>
<dbReference type="FunFam" id="3.30.160.540:FF:000001">
    <property type="entry name" value="Probable septum site-determining protein MinC"/>
    <property type="match status" value="1"/>
</dbReference>
<dbReference type="Gene3D" id="2.160.20.70">
    <property type="match status" value="1"/>
</dbReference>
<dbReference type="Gene3D" id="3.30.160.540">
    <property type="match status" value="1"/>
</dbReference>
<dbReference type="HAMAP" id="MF_00267">
    <property type="entry name" value="MinC"/>
    <property type="match status" value="1"/>
</dbReference>
<dbReference type="InterPro" id="IPR016098">
    <property type="entry name" value="CAP/MinC_C"/>
</dbReference>
<dbReference type="InterPro" id="IPR013033">
    <property type="entry name" value="MinC"/>
</dbReference>
<dbReference type="InterPro" id="IPR036145">
    <property type="entry name" value="MinC_C_sf"/>
</dbReference>
<dbReference type="InterPro" id="IPR055219">
    <property type="entry name" value="MinC_N_1"/>
</dbReference>
<dbReference type="InterPro" id="IPR005526">
    <property type="entry name" value="Septum_form_inhib_MinC_C"/>
</dbReference>
<dbReference type="NCBIfam" id="TIGR01222">
    <property type="entry name" value="minC"/>
    <property type="match status" value="1"/>
</dbReference>
<dbReference type="PANTHER" id="PTHR34108">
    <property type="entry name" value="SEPTUM SITE-DETERMINING PROTEIN MINC"/>
    <property type="match status" value="1"/>
</dbReference>
<dbReference type="PANTHER" id="PTHR34108:SF1">
    <property type="entry name" value="SEPTUM SITE-DETERMINING PROTEIN MINC"/>
    <property type="match status" value="1"/>
</dbReference>
<dbReference type="Pfam" id="PF03775">
    <property type="entry name" value="MinC_C"/>
    <property type="match status" value="1"/>
</dbReference>
<dbReference type="Pfam" id="PF22642">
    <property type="entry name" value="MinC_N_1"/>
    <property type="match status" value="1"/>
</dbReference>
<dbReference type="SUPFAM" id="SSF63848">
    <property type="entry name" value="Cell-division inhibitor MinC, C-terminal domain"/>
    <property type="match status" value="1"/>
</dbReference>
<name>MINC_BACAA</name>
<reference key="1">
    <citation type="submission" date="2009-04" db="EMBL/GenBank/DDBJ databases">
        <title>Genome sequence of Bacillus anthracis A0248.</title>
        <authorList>
            <person name="Dodson R.J."/>
            <person name="Munk A.C."/>
            <person name="Bruce D."/>
            <person name="Detter C."/>
            <person name="Tapia R."/>
            <person name="Sutton G."/>
            <person name="Sims D."/>
            <person name="Brettin T."/>
        </authorList>
    </citation>
    <scope>NUCLEOTIDE SEQUENCE [LARGE SCALE GENOMIC DNA]</scope>
    <source>
        <strain>A0248</strain>
    </source>
</reference>
<gene>
    <name evidence="1" type="primary">minC</name>
    <name type="ordered locus">BAA_4700</name>
</gene>
<sequence>MEEKKQQNVTIKGTKDGITLHLDDCCSFSELLKELDEKLSTHYYDGDGRSLIEVHVKVGNRYLTEVQQEEIRTLIRNKKNLVVDSIESDVITKEEAIAWKEETEIVPISKIVRSGQVLHVKGNLLLIGDVNPGGTVIAGGNIFVVGSLRGIAHAGYYGDSDAVIAASVMNPMQLRISDVAMRAPEEKEDGAEAAECAYINENNHIVVDRLQLLTHLRPNLTKLERGIV</sequence>
<feature type="chain" id="PRO_1000191228" description="Probable septum site-determining protein MinC">
    <location>
        <begin position="1"/>
        <end position="228"/>
    </location>
</feature>
<evidence type="ECO:0000255" key="1">
    <source>
        <dbReference type="HAMAP-Rule" id="MF_00267"/>
    </source>
</evidence>
<organism>
    <name type="scientific">Bacillus anthracis (strain A0248)</name>
    <dbReference type="NCBI Taxonomy" id="592021"/>
    <lineage>
        <taxon>Bacteria</taxon>
        <taxon>Bacillati</taxon>
        <taxon>Bacillota</taxon>
        <taxon>Bacilli</taxon>
        <taxon>Bacillales</taxon>
        <taxon>Bacillaceae</taxon>
        <taxon>Bacillus</taxon>
        <taxon>Bacillus cereus group</taxon>
    </lineage>
</organism>
<proteinExistence type="inferred from homology"/>
<comment type="function">
    <text evidence="1">Cell division inhibitor that blocks the formation of polar Z ring septums. Rapidly oscillates between the poles of the cell to destabilize FtsZ filaments that have formed before they mature into polar Z rings. Prevents FtsZ polymerization.</text>
</comment>
<comment type="subunit">
    <text evidence="1">Interacts with MinD and FtsZ.</text>
</comment>
<comment type="similarity">
    <text evidence="1">Belongs to the MinC family.</text>
</comment>
<keyword id="KW-0131">Cell cycle</keyword>
<keyword id="KW-0132">Cell division</keyword>
<keyword id="KW-0717">Septation</keyword>
<protein>
    <recommendedName>
        <fullName evidence="1">Probable septum site-determining protein MinC</fullName>
    </recommendedName>
</protein>